<name>POTA_LEGPA</name>
<feature type="chain" id="PRO_0000286240" description="Spermidine/putrescine import ATP-binding protein PotA">
    <location>
        <begin position="1"/>
        <end position="364"/>
    </location>
</feature>
<feature type="domain" description="ABC transporter" evidence="1">
    <location>
        <begin position="6"/>
        <end position="236"/>
    </location>
</feature>
<feature type="binding site" evidence="1">
    <location>
        <begin position="38"/>
        <end position="45"/>
    </location>
    <ligand>
        <name>ATP</name>
        <dbReference type="ChEBI" id="CHEBI:30616"/>
    </ligand>
</feature>
<dbReference type="EC" id="7.6.2.11" evidence="1"/>
<dbReference type="EMBL" id="CR628336">
    <property type="protein sequence ID" value="CAH12294.1"/>
    <property type="molecule type" value="Genomic_DNA"/>
</dbReference>
<dbReference type="RefSeq" id="WP_011213497.1">
    <property type="nucleotide sequence ID" value="NC_006368.1"/>
</dbReference>
<dbReference type="SMR" id="Q5X627"/>
<dbReference type="KEGG" id="lpp:lpp1143"/>
<dbReference type="LegioList" id="lpp1143"/>
<dbReference type="HOGENOM" id="CLU_000604_1_1_6"/>
<dbReference type="GO" id="GO:0043190">
    <property type="term" value="C:ATP-binding cassette (ABC) transporter complex"/>
    <property type="evidence" value="ECO:0007669"/>
    <property type="project" value="InterPro"/>
</dbReference>
<dbReference type="GO" id="GO:0015417">
    <property type="term" value="F:ABC-type polyamine transporter activity"/>
    <property type="evidence" value="ECO:0007669"/>
    <property type="project" value="UniProtKB-EC"/>
</dbReference>
<dbReference type="GO" id="GO:0005524">
    <property type="term" value="F:ATP binding"/>
    <property type="evidence" value="ECO:0007669"/>
    <property type="project" value="UniProtKB-KW"/>
</dbReference>
<dbReference type="GO" id="GO:0016887">
    <property type="term" value="F:ATP hydrolysis activity"/>
    <property type="evidence" value="ECO:0007669"/>
    <property type="project" value="InterPro"/>
</dbReference>
<dbReference type="FunFam" id="3.40.50.300:FF:000133">
    <property type="entry name" value="Spermidine/putrescine import ATP-binding protein PotA"/>
    <property type="match status" value="1"/>
</dbReference>
<dbReference type="Gene3D" id="2.40.50.100">
    <property type="match status" value="1"/>
</dbReference>
<dbReference type="Gene3D" id="3.40.50.300">
    <property type="entry name" value="P-loop containing nucleotide triphosphate hydrolases"/>
    <property type="match status" value="1"/>
</dbReference>
<dbReference type="InterPro" id="IPR003593">
    <property type="entry name" value="AAA+_ATPase"/>
</dbReference>
<dbReference type="InterPro" id="IPR050093">
    <property type="entry name" value="ABC_SmlMolc_Importer"/>
</dbReference>
<dbReference type="InterPro" id="IPR003439">
    <property type="entry name" value="ABC_transporter-like_ATP-bd"/>
</dbReference>
<dbReference type="InterPro" id="IPR017871">
    <property type="entry name" value="ABC_transporter-like_CS"/>
</dbReference>
<dbReference type="InterPro" id="IPR008995">
    <property type="entry name" value="Mo/tungstate-bd_C_term_dom"/>
</dbReference>
<dbReference type="InterPro" id="IPR027417">
    <property type="entry name" value="P-loop_NTPase"/>
</dbReference>
<dbReference type="InterPro" id="IPR005893">
    <property type="entry name" value="PotA-like"/>
</dbReference>
<dbReference type="InterPro" id="IPR013611">
    <property type="entry name" value="Transp-assoc_OB_typ2"/>
</dbReference>
<dbReference type="NCBIfam" id="TIGR01187">
    <property type="entry name" value="potA"/>
    <property type="match status" value="1"/>
</dbReference>
<dbReference type="NCBIfam" id="NF006987">
    <property type="entry name" value="PRK09452.1"/>
    <property type="match status" value="1"/>
</dbReference>
<dbReference type="PANTHER" id="PTHR42781">
    <property type="entry name" value="SPERMIDINE/PUTRESCINE IMPORT ATP-BINDING PROTEIN POTA"/>
    <property type="match status" value="1"/>
</dbReference>
<dbReference type="PANTHER" id="PTHR42781:SF4">
    <property type="entry name" value="SPERMIDINE_PUTRESCINE IMPORT ATP-BINDING PROTEIN POTA"/>
    <property type="match status" value="1"/>
</dbReference>
<dbReference type="Pfam" id="PF00005">
    <property type="entry name" value="ABC_tran"/>
    <property type="match status" value="1"/>
</dbReference>
<dbReference type="Pfam" id="PF08402">
    <property type="entry name" value="TOBE_2"/>
    <property type="match status" value="1"/>
</dbReference>
<dbReference type="SMART" id="SM00382">
    <property type="entry name" value="AAA"/>
    <property type="match status" value="1"/>
</dbReference>
<dbReference type="SUPFAM" id="SSF50331">
    <property type="entry name" value="MOP-like"/>
    <property type="match status" value="1"/>
</dbReference>
<dbReference type="SUPFAM" id="SSF52540">
    <property type="entry name" value="P-loop containing nucleoside triphosphate hydrolases"/>
    <property type="match status" value="1"/>
</dbReference>
<dbReference type="PROSITE" id="PS00211">
    <property type="entry name" value="ABC_TRANSPORTER_1"/>
    <property type="match status" value="1"/>
</dbReference>
<dbReference type="PROSITE" id="PS50893">
    <property type="entry name" value="ABC_TRANSPORTER_2"/>
    <property type="match status" value="1"/>
</dbReference>
<dbReference type="PROSITE" id="PS51305">
    <property type="entry name" value="POTA"/>
    <property type="match status" value="1"/>
</dbReference>
<gene>
    <name evidence="1" type="primary">potA</name>
    <name type="ordered locus">lpp1143</name>
</gene>
<organism>
    <name type="scientific">Legionella pneumophila (strain Paris)</name>
    <dbReference type="NCBI Taxonomy" id="297246"/>
    <lineage>
        <taxon>Bacteria</taxon>
        <taxon>Pseudomonadati</taxon>
        <taxon>Pseudomonadota</taxon>
        <taxon>Gammaproteobacteria</taxon>
        <taxon>Legionellales</taxon>
        <taxon>Legionellaceae</taxon>
        <taxon>Legionella</taxon>
    </lineage>
</organism>
<evidence type="ECO:0000255" key="1">
    <source>
        <dbReference type="HAMAP-Rule" id="MF_01726"/>
    </source>
</evidence>
<comment type="function">
    <text evidence="1">Part of the ABC transporter complex PotABCD involved in spermidine/putrescine import. Responsible for energy coupling to the transport system.</text>
</comment>
<comment type="catalytic activity">
    <reaction evidence="1">
        <text>ATP + H2O + polyamine-[polyamine-binding protein]Side 1 = ADP + phosphate + polyamineSide 2 + [polyamine-binding protein]Side 1.</text>
        <dbReference type="EC" id="7.6.2.11"/>
    </reaction>
</comment>
<comment type="subunit">
    <text evidence="1">The complex is composed of two ATP-binding proteins (PotA), two transmembrane proteins (PotB and PotC) and a solute-binding protein (PotD).</text>
</comment>
<comment type="subcellular location">
    <subcellularLocation>
        <location evidence="1">Cell inner membrane</location>
        <topology evidence="1">Peripheral membrane protein</topology>
    </subcellularLocation>
</comment>
<comment type="similarity">
    <text evidence="1">Belongs to the ABC transporter superfamily. Spermidine/putrescine importer (TC 3.A.1.11.1) family.</text>
</comment>
<accession>Q5X627</accession>
<reference key="1">
    <citation type="journal article" date="2004" name="Nat. Genet.">
        <title>Evidence in the Legionella pneumophila genome for exploitation of host cell functions and high genome plasticity.</title>
        <authorList>
            <person name="Cazalet C."/>
            <person name="Rusniok C."/>
            <person name="Brueggemann H."/>
            <person name="Zidane N."/>
            <person name="Magnier A."/>
            <person name="Ma L."/>
            <person name="Tichit M."/>
            <person name="Jarraud S."/>
            <person name="Bouchier C."/>
            <person name="Vandenesch F."/>
            <person name="Kunst F."/>
            <person name="Etienne J."/>
            <person name="Glaser P."/>
            <person name="Buchrieser C."/>
        </authorList>
    </citation>
    <scope>NUCLEOTIDE SEQUENCE [LARGE SCALE GENOMIC DNA]</scope>
    <source>
        <strain>Paris</strain>
    </source>
</reference>
<sequence length="364" mass="41398">MTTPLIEIRQIYKSYGNTPILNNVSLNVNHGEFLTLLGPSGCGKTTLLRLISGFEQPTQGEIFINGQCVNQLPPQKRDVHTVFQSYALFPHLSVFENVAFALRCKKTSNQEIKERVFDALKLVQLELLAERNVKQLSGGQQQRVAIARAIINRPQVLLLDEPLSSLDYRLRKAMQSELKQLQKTLNMTFIFVTHDQEEALSMSDRIVVFNHGHIEQIGTPKAVYETPANLHVAMFIGEANIFDIQVHTVKDQDIVTNIEGIQLSCKNTGNYQVNEWLHLIVRPEDIRVWSLSEVEKTEGMLPGRIVDIIYKGSTVDLKVELSSGKIINASEFFDEDDDKLEYTLHETVWVQWLPGWEVLLPYEG</sequence>
<keyword id="KW-0067">ATP-binding</keyword>
<keyword id="KW-0997">Cell inner membrane</keyword>
<keyword id="KW-1003">Cell membrane</keyword>
<keyword id="KW-0472">Membrane</keyword>
<keyword id="KW-0547">Nucleotide-binding</keyword>
<keyword id="KW-1278">Translocase</keyword>
<keyword id="KW-0813">Transport</keyword>
<proteinExistence type="inferred from homology"/>
<protein>
    <recommendedName>
        <fullName evidence="1">Spermidine/putrescine import ATP-binding protein PotA</fullName>
        <ecNumber evidence="1">7.6.2.11</ecNumber>
    </recommendedName>
</protein>